<name>HLDE_SHEDO</name>
<gene>
    <name evidence="1" type="primary">hldE</name>
    <name type="ordered locus">Sden_0709</name>
</gene>
<feature type="chain" id="PRO_0000291687" description="Bifunctional protein HldE">
    <location>
        <begin position="1"/>
        <end position="476"/>
    </location>
</feature>
<feature type="region of interest" description="Ribokinase">
    <location>
        <begin position="1"/>
        <end position="319"/>
    </location>
</feature>
<feature type="region of interest" description="Cytidylyltransferase">
    <location>
        <begin position="345"/>
        <end position="476"/>
    </location>
</feature>
<feature type="active site" evidence="1">
    <location>
        <position position="264"/>
    </location>
</feature>
<feature type="binding site" evidence="1">
    <location>
        <begin position="195"/>
        <end position="198"/>
    </location>
    <ligand>
        <name>ATP</name>
        <dbReference type="ChEBI" id="CHEBI:30616"/>
    </ligand>
</feature>
<organism>
    <name type="scientific">Shewanella denitrificans (strain OS217 / ATCC BAA-1090 / DSM 15013)</name>
    <dbReference type="NCBI Taxonomy" id="318161"/>
    <lineage>
        <taxon>Bacteria</taxon>
        <taxon>Pseudomonadati</taxon>
        <taxon>Pseudomonadota</taxon>
        <taxon>Gammaproteobacteria</taxon>
        <taxon>Alteromonadales</taxon>
        <taxon>Shewanellaceae</taxon>
        <taxon>Shewanella</taxon>
    </lineage>
</organism>
<proteinExistence type="inferred from homology"/>
<evidence type="ECO:0000255" key="1">
    <source>
        <dbReference type="HAMAP-Rule" id="MF_01603"/>
    </source>
</evidence>
<evidence type="ECO:0000305" key="2"/>
<reference key="1">
    <citation type="submission" date="2006-03" db="EMBL/GenBank/DDBJ databases">
        <title>Complete sequence of Shewanella denitrificans OS217.</title>
        <authorList>
            <consortium name="US DOE Joint Genome Institute"/>
            <person name="Copeland A."/>
            <person name="Lucas S."/>
            <person name="Lapidus A."/>
            <person name="Barry K."/>
            <person name="Detter J.C."/>
            <person name="Glavina del Rio T."/>
            <person name="Hammon N."/>
            <person name="Israni S."/>
            <person name="Dalin E."/>
            <person name="Tice H."/>
            <person name="Pitluck S."/>
            <person name="Brettin T."/>
            <person name="Bruce D."/>
            <person name="Han C."/>
            <person name="Tapia R."/>
            <person name="Gilna P."/>
            <person name="Kiss H."/>
            <person name="Schmutz J."/>
            <person name="Larimer F."/>
            <person name="Land M."/>
            <person name="Hauser L."/>
            <person name="Kyrpides N."/>
            <person name="Lykidis A."/>
            <person name="Richardson P."/>
        </authorList>
    </citation>
    <scope>NUCLEOTIDE SEQUENCE [LARGE SCALE GENOMIC DNA]</scope>
    <source>
        <strain>OS217 / ATCC BAA-1090 / DSM 15013</strain>
    </source>
</reference>
<protein>
    <recommendedName>
        <fullName evidence="1">Bifunctional protein HldE</fullName>
    </recommendedName>
    <domain>
        <recommendedName>
            <fullName evidence="1">D-beta-D-heptose 7-phosphate kinase</fullName>
            <ecNumber evidence="1">2.7.1.167</ecNumber>
        </recommendedName>
        <alternativeName>
            <fullName evidence="1">D-beta-D-heptose 7-phosphotransferase</fullName>
        </alternativeName>
        <alternativeName>
            <fullName evidence="1">D-glycero-beta-D-manno-heptose-7-phosphate kinase</fullName>
        </alternativeName>
    </domain>
    <domain>
        <recommendedName>
            <fullName evidence="1">D-beta-D-heptose 1-phosphate adenylyltransferase</fullName>
            <ecNumber evidence="1">2.7.7.70</ecNumber>
        </recommendedName>
        <alternativeName>
            <fullName evidence="1">D-glycero-beta-D-manno-heptose 1-phosphate adenylyltransferase</fullName>
        </alternativeName>
    </domain>
</protein>
<keyword id="KW-0067">ATP-binding</keyword>
<keyword id="KW-0119">Carbohydrate metabolism</keyword>
<keyword id="KW-0418">Kinase</keyword>
<keyword id="KW-0511">Multifunctional enzyme</keyword>
<keyword id="KW-0547">Nucleotide-binding</keyword>
<keyword id="KW-0548">Nucleotidyltransferase</keyword>
<keyword id="KW-1185">Reference proteome</keyword>
<keyword id="KW-0808">Transferase</keyword>
<comment type="function">
    <text evidence="1">Catalyzes the phosphorylation of D-glycero-D-manno-heptose 7-phosphate at the C-1 position to selectively form D-glycero-beta-D-manno-heptose-1,7-bisphosphate.</text>
</comment>
<comment type="function">
    <text evidence="1">Catalyzes the ADP transfer from ATP to D-glycero-beta-D-manno-heptose 1-phosphate, yielding ADP-D-glycero-beta-D-manno-heptose.</text>
</comment>
<comment type="catalytic activity">
    <reaction evidence="1">
        <text>D-glycero-beta-D-manno-heptose 7-phosphate + ATP = D-glycero-beta-D-manno-heptose 1,7-bisphosphate + ADP + H(+)</text>
        <dbReference type="Rhea" id="RHEA:27473"/>
        <dbReference type="ChEBI" id="CHEBI:15378"/>
        <dbReference type="ChEBI" id="CHEBI:30616"/>
        <dbReference type="ChEBI" id="CHEBI:60204"/>
        <dbReference type="ChEBI" id="CHEBI:60208"/>
        <dbReference type="ChEBI" id="CHEBI:456216"/>
        <dbReference type="EC" id="2.7.1.167"/>
    </reaction>
</comment>
<comment type="catalytic activity">
    <reaction evidence="1">
        <text>D-glycero-beta-D-manno-heptose 1-phosphate + ATP + H(+) = ADP-D-glycero-beta-D-manno-heptose + diphosphate</text>
        <dbReference type="Rhea" id="RHEA:27465"/>
        <dbReference type="ChEBI" id="CHEBI:15378"/>
        <dbReference type="ChEBI" id="CHEBI:30616"/>
        <dbReference type="ChEBI" id="CHEBI:33019"/>
        <dbReference type="ChEBI" id="CHEBI:59967"/>
        <dbReference type="ChEBI" id="CHEBI:61593"/>
        <dbReference type="EC" id="2.7.7.70"/>
    </reaction>
</comment>
<comment type="pathway">
    <text evidence="1">Nucleotide-sugar biosynthesis; ADP-L-glycero-beta-D-manno-heptose biosynthesis; ADP-L-glycero-beta-D-manno-heptose from D-glycero-beta-D-manno-heptose 7-phosphate: step 1/4.</text>
</comment>
<comment type="pathway">
    <text evidence="1">Nucleotide-sugar biosynthesis; ADP-L-glycero-beta-D-manno-heptose biosynthesis; ADP-L-glycero-beta-D-manno-heptose from D-glycero-beta-D-manno-heptose 7-phosphate: step 3/4.</text>
</comment>
<comment type="subunit">
    <text evidence="1">Homodimer.</text>
</comment>
<comment type="similarity">
    <text evidence="1">In the N-terminal section; belongs to the carbohydrate kinase PfkB family.</text>
</comment>
<comment type="similarity">
    <text evidence="1">In the C-terminal section; belongs to the cytidylyltransferase family.</text>
</comment>
<comment type="sequence caution" evidence="2">
    <conflict type="erroneous initiation">
        <sequence resource="EMBL-CDS" id="ABE53999"/>
    </conflict>
</comment>
<dbReference type="EC" id="2.7.1.167" evidence="1"/>
<dbReference type="EC" id="2.7.7.70" evidence="1"/>
<dbReference type="EMBL" id="CP000302">
    <property type="protein sequence ID" value="ABE53999.1"/>
    <property type="status" value="ALT_INIT"/>
    <property type="molecule type" value="Genomic_DNA"/>
</dbReference>
<dbReference type="RefSeq" id="WP_041405657.1">
    <property type="nucleotide sequence ID" value="NC_007954.1"/>
</dbReference>
<dbReference type="SMR" id="Q12RC7"/>
<dbReference type="STRING" id="318161.Sden_0709"/>
<dbReference type="KEGG" id="sdn:Sden_0709"/>
<dbReference type="eggNOG" id="COG0615">
    <property type="taxonomic scope" value="Bacteria"/>
</dbReference>
<dbReference type="eggNOG" id="COG2870">
    <property type="taxonomic scope" value="Bacteria"/>
</dbReference>
<dbReference type="HOGENOM" id="CLU_021150_2_1_6"/>
<dbReference type="OrthoDB" id="9802794at2"/>
<dbReference type="UniPathway" id="UPA00356">
    <property type="reaction ID" value="UER00437"/>
</dbReference>
<dbReference type="UniPathway" id="UPA00356">
    <property type="reaction ID" value="UER00439"/>
</dbReference>
<dbReference type="Proteomes" id="UP000001982">
    <property type="component" value="Chromosome"/>
</dbReference>
<dbReference type="GO" id="GO:0005829">
    <property type="term" value="C:cytosol"/>
    <property type="evidence" value="ECO:0007669"/>
    <property type="project" value="TreeGrafter"/>
</dbReference>
<dbReference type="GO" id="GO:0005524">
    <property type="term" value="F:ATP binding"/>
    <property type="evidence" value="ECO:0007669"/>
    <property type="project" value="UniProtKB-UniRule"/>
</dbReference>
<dbReference type="GO" id="GO:0033785">
    <property type="term" value="F:heptose 7-phosphate kinase activity"/>
    <property type="evidence" value="ECO:0007669"/>
    <property type="project" value="UniProtKB-UniRule"/>
</dbReference>
<dbReference type="GO" id="GO:0033786">
    <property type="term" value="F:heptose-1-phosphate adenylyltransferase activity"/>
    <property type="evidence" value="ECO:0007669"/>
    <property type="project" value="UniProtKB-UniRule"/>
</dbReference>
<dbReference type="GO" id="GO:0016773">
    <property type="term" value="F:phosphotransferase activity, alcohol group as acceptor"/>
    <property type="evidence" value="ECO:0007669"/>
    <property type="project" value="InterPro"/>
</dbReference>
<dbReference type="GO" id="GO:0097171">
    <property type="term" value="P:ADP-L-glycero-beta-D-manno-heptose biosynthetic process"/>
    <property type="evidence" value="ECO:0007669"/>
    <property type="project" value="UniProtKB-UniPathway"/>
</dbReference>
<dbReference type="CDD" id="cd01172">
    <property type="entry name" value="RfaE_like"/>
    <property type="match status" value="1"/>
</dbReference>
<dbReference type="FunFam" id="3.40.1190.20:FF:000002">
    <property type="entry name" value="Bifunctional protein HldE"/>
    <property type="match status" value="1"/>
</dbReference>
<dbReference type="FunFam" id="3.40.50.620:FF:000028">
    <property type="entry name" value="Bifunctional protein HldE"/>
    <property type="match status" value="1"/>
</dbReference>
<dbReference type="Gene3D" id="3.40.1190.20">
    <property type="match status" value="1"/>
</dbReference>
<dbReference type="Gene3D" id="3.40.50.620">
    <property type="entry name" value="HUPs"/>
    <property type="match status" value="1"/>
</dbReference>
<dbReference type="HAMAP" id="MF_01603">
    <property type="entry name" value="HldE"/>
    <property type="match status" value="1"/>
</dbReference>
<dbReference type="InterPro" id="IPR023030">
    <property type="entry name" value="Bifunc_HldE"/>
</dbReference>
<dbReference type="InterPro" id="IPR002173">
    <property type="entry name" value="Carboh/pur_kinase_PfkB_CS"/>
</dbReference>
<dbReference type="InterPro" id="IPR004821">
    <property type="entry name" value="Cyt_trans-like"/>
</dbReference>
<dbReference type="InterPro" id="IPR011611">
    <property type="entry name" value="PfkB_dom"/>
</dbReference>
<dbReference type="InterPro" id="IPR011913">
    <property type="entry name" value="RfaE_dom_I"/>
</dbReference>
<dbReference type="InterPro" id="IPR011914">
    <property type="entry name" value="RfaE_dom_II"/>
</dbReference>
<dbReference type="InterPro" id="IPR029056">
    <property type="entry name" value="Ribokinase-like"/>
</dbReference>
<dbReference type="InterPro" id="IPR014729">
    <property type="entry name" value="Rossmann-like_a/b/a_fold"/>
</dbReference>
<dbReference type="NCBIfam" id="TIGR00125">
    <property type="entry name" value="cyt_tran_rel"/>
    <property type="match status" value="1"/>
</dbReference>
<dbReference type="NCBIfam" id="NF008454">
    <property type="entry name" value="PRK11316.1"/>
    <property type="match status" value="1"/>
</dbReference>
<dbReference type="NCBIfam" id="TIGR02198">
    <property type="entry name" value="rfaE_dom_I"/>
    <property type="match status" value="1"/>
</dbReference>
<dbReference type="NCBIfam" id="TIGR02199">
    <property type="entry name" value="rfaE_dom_II"/>
    <property type="match status" value="1"/>
</dbReference>
<dbReference type="PANTHER" id="PTHR46969">
    <property type="entry name" value="BIFUNCTIONAL PROTEIN HLDE"/>
    <property type="match status" value="1"/>
</dbReference>
<dbReference type="PANTHER" id="PTHR46969:SF1">
    <property type="entry name" value="BIFUNCTIONAL PROTEIN HLDE"/>
    <property type="match status" value="1"/>
</dbReference>
<dbReference type="Pfam" id="PF01467">
    <property type="entry name" value="CTP_transf_like"/>
    <property type="match status" value="1"/>
</dbReference>
<dbReference type="Pfam" id="PF00294">
    <property type="entry name" value="PfkB"/>
    <property type="match status" value="1"/>
</dbReference>
<dbReference type="SUPFAM" id="SSF52374">
    <property type="entry name" value="Nucleotidylyl transferase"/>
    <property type="match status" value="1"/>
</dbReference>
<dbReference type="SUPFAM" id="SSF53613">
    <property type="entry name" value="Ribokinase-like"/>
    <property type="match status" value="1"/>
</dbReference>
<dbReference type="PROSITE" id="PS00583">
    <property type="entry name" value="PFKB_KINASES_1"/>
    <property type="match status" value="1"/>
</dbReference>
<dbReference type="PROSITE" id="PS00584">
    <property type="entry name" value="PFKB_KINASES_2"/>
    <property type="match status" value="1"/>
</dbReference>
<sequence>MKVTLPAFEKARVLVLGDVMLDRYWVGPTGRISPEAPVPVVKINQIEDRPGGAANVALNIATLGGQVQLAGLVGDDETAKALTLGVQTLGVEPQWLVVNDKPTITKLRVLSRNQQLIRLDFEEEFDSASSQALFKQSEAMLDNVDVLVLSDYAKGAIADPRAFIAKARAKGVTVLVDPKGSDFARYHGASLITPNMSEFEAVVGPVKDEADLIEKARQLIKTHEFSAMLVTRSEKGMTLITADEPELHIPTVAREVYDVTGAGDTVISALATSLGAGSTLAQACAIANTAAGVVVGKLGTSTVSRIELIGALASHQGESGFGVVSEDQLAYAMEQARLRGERVVMTNGCFDILHAGHVSYLKQAKALGDRLIVAVNSDASVKRLKGDGRPVNQVDRRMAVLAGLAAVDWVVPFCEDTPERIITRLLPDALVKGGDYKVEDIAGGAQVIAAGGKVEVLGFEDGVSTTSIIQNIMARQ</sequence>
<accession>Q12RC7</accession>